<name>HTDZ_MYCBO</name>
<accession>Q7U2S5</accession>
<accession>A0A1R3XUH3</accession>
<accession>X2BE39</accession>
<feature type="chain" id="PRO_0000262760" description="3-hydroxyacyl-thioester dehydratase Z">
    <location>
        <begin position="1"/>
        <end position="151"/>
    </location>
</feature>
<feature type="domain" description="MaoC-like" evidence="3">
    <location>
        <begin position="11"/>
        <end position="131"/>
    </location>
</feature>
<feature type="binding site" evidence="1">
    <location>
        <begin position="60"/>
        <end position="63"/>
    </location>
    <ligand>
        <name>substrate</name>
    </ligand>
</feature>
<feature type="binding site" description="in homodimeric partner" evidence="1">
    <location>
        <begin position="86"/>
        <end position="89"/>
    </location>
    <ligand>
        <name>substrate</name>
    </ligand>
</feature>
<feature type="binding site" evidence="1">
    <location>
        <begin position="97"/>
        <end position="99"/>
    </location>
    <ligand>
        <name>substrate</name>
    </ligand>
</feature>
<feature type="binding site" description="in homodimeric partner" evidence="2">
    <location>
        <position position="124"/>
    </location>
    <ligand>
        <name>substrate</name>
    </ligand>
</feature>
<feature type="binding site" description="in homodimeric partner" evidence="2">
    <location>
        <position position="148"/>
    </location>
    <ligand>
        <name>substrate</name>
    </ligand>
</feature>
<feature type="site" description="Important for catalytic activity" evidence="2">
    <location>
        <position position="40"/>
    </location>
</feature>
<feature type="site" description="Transition state stabilizer" evidence="3">
    <location>
        <position position="42"/>
    </location>
</feature>
<feature type="site" description="Important for catalytic activity" evidence="2">
    <location>
        <position position="45"/>
    </location>
</feature>
<reference key="1">
    <citation type="journal article" date="2003" name="Proc. Natl. Acad. Sci. U.S.A.">
        <title>The complete genome sequence of Mycobacterium bovis.</title>
        <authorList>
            <person name="Garnier T."/>
            <person name="Eiglmeier K."/>
            <person name="Camus J.-C."/>
            <person name="Medina N."/>
            <person name="Mansoor H."/>
            <person name="Pryor M."/>
            <person name="Duthoy S."/>
            <person name="Grondin S."/>
            <person name="Lacroix C."/>
            <person name="Monsempe C."/>
            <person name="Simon S."/>
            <person name="Harris B."/>
            <person name="Atkin R."/>
            <person name="Doggett J."/>
            <person name="Mayes R."/>
            <person name="Keating L."/>
            <person name="Wheeler P.R."/>
            <person name="Parkhill J."/>
            <person name="Barrell B.G."/>
            <person name="Cole S.T."/>
            <person name="Gordon S.V."/>
            <person name="Hewinson R.G."/>
        </authorList>
    </citation>
    <scope>NUCLEOTIDE SEQUENCE [LARGE SCALE GENOMIC DNA]</scope>
    <source>
        <strain>ATCC BAA-935 / AF2122/97</strain>
    </source>
</reference>
<reference key="2">
    <citation type="journal article" date="2017" name="Genome Announc.">
        <title>Updated reference genome sequence and annotation of Mycobacterium bovis AF2122/97.</title>
        <authorList>
            <person name="Malone K.M."/>
            <person name="Farrell D."/>
            <person name="Stuber T.P."/>
            <person name="Schubert O.T."/>
            <person name="Aebersold R."/>
            <person name="Robbe-Austerman S."/>
            <person name="Gordon S.V."/>
        </authorList>
    </citation>
    <scope>NUCLEOTIDE SEQUENCE [LARGE SCALE GENOMIC DNA]</scope>
    <scope>GENOME REANNOTATION</scope>
    <source>
        <strain>ATCC BAA-935 / AF2122/97</strain>
    </source>
</reference>
<sequence>MRTFESVADLAAAAGEKVGQSDWVTITQEEVNLFADATGDHQWIHVDPERAAAGPFGTTIAHGFMTLALLPRLQHQMYTVKGVKLAINYGLNKVRFPAPVPVGSRVRATSSLVGVEDLGNGTVQATVSTTVEVEGSAKPACVAESIVRYVA</sequence>
<gene>
    <name evidence="2" type="primary">htdZ</name>
    <name type="ordered locus">BQ2027_MB0135</name>
</gene>
<protein>
    <recommendedName>
        <fullName evidence="2">3-hydroxyacyl-thioester dehydratase Z</fullName>
        <ecNumber evidence="2">4.2.1.-</ecNumber>
    </recommendedName>
    <alternativeName>
        <fullName evidence="4">Enoyl-CoA hydratase 2</fullName>
        <ecNumber evidence="2">4.2.1.119</ecNumber>
    </alternativeName>
</protein>
<keyword id="KW-0276">Fatty acid metabolism</keyword>
<keyword id="KW-0443">Lipid metabolism</keyword>
<keyword id="KW-0456">Lyase</keyword>
<keyword id="KW-1185">Reference proteome</keyword>
<comment type="function">
    <text evidence="2">Shows trans-enoyl-CoA hydratase/3-hydroxyacyl-CoA dehydratase activity.</text>
</comment>
<comment type="catalytic activity">
    <reaction evidence="2">
        <text>a (3R)-3-hydroxyacyl-CoA = a (2E)-enoyl-CoA + H2O</text>
        <dbReference type="Rhea" id="RHEA:26526"/>
        <dbReference type="ChEBI" id="CHEBI:15377"/>
        <dbReference type="ChEBI" id="CHEBI:57319"/>
        <dbReference type="ChEBI" id="CHEBI:58856"/>
        <dbReference type="EC" id="4.2.1.119"/>
    </reaction>
</comment>
<comment type="subunit">
    <text evidence="2">Homodimer.</text>
</comment>
<comment type="similarity">
    <text evidence="4">Belongs to the enoyl-CoA hydratase/isomerase family.</text>
</comment>
<dbReference type="EC" id="4.2.1.-" evidence="2"/>
<dbReference type="EC" id="4.2.1.119" evidence="2"/>
<dbReference type="EMBL" id="LT708304">
    <property type="protein sequence ID" value="SIT98558.1"/>
    <property type="molecule type" value="Genomic_DNA"/>
</dbReference>
<dbReference type="RefSeq" id="NP_853802.1">
    <property type="nucleotide sequence ID" value="NC_002945.3"/>
</dbReference>
<dbReference type="RefSeq" id="WP_003400912.1">
    <property type="nucleotide sequence ID" value="NC_002945.4"/>
</dbReference>
<dbReference type="SMR" id="Q7U2S5"/>
<dbReference type="GeneID" id="45424096"/>
<dbReference type="PATRIC" id="fig|233413.5.peg.153"/>
<dbReference type="Proteomes" id="UP000001419">
    <property type="component" value="Chromosome"/>
</dbReference>
<dbReference type="GO" id="GO:0016829">
    <property type="term" value="F:lyase activity"/>
    <property type="evidence" value="ECO:0007669"/>
    <property type="project" value="UniProtKB-KW"/>
</dbReference>
<dbReference type="GO" id="GO:0006631">
    <property type="term" value="P:fatty acid metabolic process"/>
    <property type="evidence" value="ECO:0007669"/>
    <property type="project" value="UniProtKB-KW"/>
</dbReference>
<dbReference type="CDD" id="cd03450">
    <property type="entry name" value="NodN"/>
    <property type="match status" value="1"/>
</dbReference>
<dbReference type="FunFam" id="3.10.129.10:FF:000053">
    <property type="entry name" value="Probable enoyl-CoA hydratase 1"/>
    <property type="match status" value="1"/>
</dbReference>
<dbReference type="Gene3D" id="3.10.129.10">
    <property type="entry name" value="Hotdog Thioesterase"/>
    <property type="match status" value="1"/>
</dbReference>
<dbReference type="InterPro" id="IPR029069">
    <property type="entry name" value="HotDog_dom_sf"/>
</dbReference>
<dbReference type="InterPro" id="IPR002539">
    <property type="entry name" value="MaoC-like_dom"/>
</dbReference>
<dbReference type="InterPro" id="IPR039375">
    <property type="entry name" value="NodN-like"/>
</dbReference>
<dbReference type="PANTHER" id="PTHR42993">
    <property type="entry name" value="MAOC-LIKE DEHYDRATASE DOMAIN-CONTAINING PROTEIN"/>
    <property type="match status" value="1"/>
</dbReference>
<dbReference type="PANTHER" id="PTHR42993:SF1">
    <property type="entry name" value="MAOC-LIKE DEHYDRATASE DOMAIN-CONTAINING PROTEIN"/>
    <property type="match status" value="1"/>
</dbReference>
<dbReference type="Pfam" id="PF01575">
    <property type="entry name" value="MaoC_dehydratas"/>
    <property type="match status" value="1"/>
</dbReference>
<dbReference type="SUPFAM" id="SSF54637">
    <property type="entry name" value="Thioesterase/thiol ester dehydrase-isomerase"/>
    <property type="match status" value="1"/>
</dbReference>
<evidence type="ECO:0000250" key="1">
    <source>
        <dbReference type="UniProtKB" id="P96807"/>
    </source>
</evidence>
<evidence type="ECO:0000250" key="2">
    <source>
        <dbReference type="UniProtKB" id="P9WNP3"/>
    </source>
</evidence>
<evidence type="ECO:0000255" key="3"/>
<evidence type="ECO:0000305" key="4"/>
<proteinExistence type="inferred from homology"/>
<organism>
    <name type="scientific">Mycobacterium bovis (strain ATCC BAA-935 / AF2122/97)</name>
    <dbReference type="NCBI Taxonomy" id="233413"/>
    <lineage>
        <taxon>Bacteria</taxon>
        <taxon>Bacillati</taxon>
        <taxon>Actinomycetota</taxon>
        <taxon>Actinomycetes</taxon>
        <taxon>Mycobacteriales</taxon>
        <taxon>Mycobacteriaceae</taxon>
        <taxon>Mycobacterium</taxon>
        <taxon>Mycobacterium tuberculosis complex</taxon>
    </lineage>
</organism>